<reference key="1">
    <citation type="journal article" date="2007" name="Nature">
        <title>Evolution of genes and genomes on the Drosophila phylogeny.</title>
        <authorList>
            <consortium name="Drosophila 12 genomes consortium"/>
        </authorList>
    </citation>
    <scope>NUCLEOTIDE SEQUENCE [LARGE SCALE GENOMIC DNA]</scope>
    <source>
        <strain>Tai18E2 / Tucson 14021-0261.01</strain>
    </source>
</reference>
<sequence>MVDDSTRKTLSNIPLLQIRAGPREKDVWVQRLKEEYQALIKYVENNKQSGSDWFRLESNKEGTKWFGKCWYMHNLLKYEFDVEFDIPVTYPTTAPEIALPELDGKTAKMYRGGKICLTDHFKPLWARNVPKFGIAHAMALGLAPWLAVEIPDLIEKGIITYKEK</sequence>
<comment type="function">
    <text evidence="1">E2-like enzyme which forms an intermediate with UFM1 via a thioester linkage.</text>
</comment>
<comment type="similarity">
    <text evidence="2">Belongs to the ubiquitin-conjugating enzyme family. UFC1 subfamily.</text>
</comment>
<organism>
    <name type="scientific">Drosophila yakuba</name>
    <name type="common">Fruit fly</name>
    <dbReference type="NCBI Taxonomy" id="7245"/>
    <lineage>
        <taxon>Eukaryota</taxon>
        <taxon>Metazoa</taxon>
        <taxon>Ecdysozoa</taxon>
        <taxon>Arthropoda</taxon>
        <taxon>Hexapoda</taxon>
        <taxon>Insecta</taxon>
        <taxon>Pterygota</taxon>
        <taxon>Neoptera</taxon>
        <taxon>Endopterygota</taxon>
        <taxon>Diptera</taxon>
        <taxon>Brachycera</taxon>
        <taxon>Muscomorpha</taxon>
        <taxon>Ephydroidea</taxon>
        <taxon>Drosophilidae</taxon>
        <taxon>Drosophila</taxon>
        <taxon>Sophophora</taxon>
    </lineage>
</organism>
<name>UFC1_DROYA</name>
<proteinExistence type="inferred from homology"/>
<protein>
    <recommendedName>
        <fullName>Ubiquitin-fold modifier-conjugating enzyme 1</fullName>
    </recommendedName>
    <alternativeName>
        <fullName>Ufm1-conjugating enzyme 1</fullName>
    </alternativeName>
</protein>
<dbReference type="EMBL" id="CM000158">
    <property type="protein sequence ID" value="EDW92006.1"/>
    <property type="molecule type" value="Genomic_DNA"/>
</dbReference>
<dbReference type="SMR" id="B4P6S9"/>
<dbReference type="EnsemblMetazoa" id="FBtr0260625">
    <property type="protein sequence ID" value="FBpp0259117"/>
    <property type="gene ID" value="FBgn0231732"/>
</dbReference>
<dbReference type="EnsemblMetazoa" id="XM_002092258.4">
    <property type="protein sequence ID" value="XP_002092294.1"/>
    <property type="gene ID" value="LOC6531495"/>
</dbReference>
<dbReference type="GeneID" id="6531495"/>
<dbReference type="KEGG" id="dya:Dyak_GE14107"/>
<dbReference type="CTD" id="51506"/>
<dbReference type="eggNOG" id="KOG3357">
    <property type="taxonomic scope" value="Eukaryota"/>
</dbReference>
<dbReference type="HOGENOM" id="CLU_101170_0_0_1"/>
<dbReference type="OMA" id="LWQKNVP"/>
<dbReference type="OrthoDB" id="10256182at2759"/>
<dbReference type="PhylomeDB" id="B4P6S9"/>
<dbReference type="Proteomes" id="UP000002282">
    <property type="component" value="Chromosome 2R"/>
</dbReference>
<dbReference type="GO" id="GO:0005737">
    <property type="term" value="C:cytoplasm"/>
    <property type="evidence" value="ECO:0007669"/>
    <property type="project" value="TreeGrafter"/>
</dbReference>
<dbReference type="GO" id="GO:0061657">
    <property type="term" value="F:UFM1 conjugating enzyme activity"/>
    <property type="evidence" value="ECO:0007669"/>
    <property type="project" value="InterPro"/>
</dbReference>
<dbReference type="GO" id="GO:1990592">
    <property type="term" value="P:protein K69-linked ufmylation"/>
    <property type="evidence" value="ECO:0007669"/>
    <property type="project" value="TreeGrafter"/>
</dbReference>
<dbReference type="CDD" id="cd11686">
    <property type="entry name" value="UBCc_UFC1"/>
    <property type="match status" value="1"/>
</dbReference>
<dbReference type="FunFam" id="3.10.110.10:FF:000042">
    <property type="entry name" value="Ubiquitin-fold modifier-conjugating enzyme 1"/>
    <property type="match status" value="1"/>
</dbReference>
<dbReference type="Gene3D" id="3.10.110.10">
    <property type="entry name" value="Ubiquitin Conjugating Enzyme"/>
    <property type="match status" value="1"/>
</dbReference>
<dbReference type="InterPro" id="IPR016135">
    <property type="entry name" value="UBQ-conjugating_enzyme/RWD"/>
</dbReference>
<dbReference type="InterPro" id="IPR014806">
    <property type="entry name" value="Ufc1"/>
</dbReference>
<dbReference type="PANTHER" id="PTHR12921">
    <property type="entry name" value="UBIQUITIN-FOLD MODIFIER-CONJUGATING ENZYME 1"/>
    <property type="match status" value="1"/>
</dbReference>
<dbReference type="PANTHER" id="PTHR12921:SF0">
    <property type="entry name" value="UBIQUITIN-FOLD MODIFIER-CONJUGATING ENZYME 1"/>
    <property type="match status" value="1"/>
</dbReference>
<dbReference type="Pfam" id="PF08694">
    <property type="entry name" value="UFC1"/>
    <property type="match status" value="1"/>
</dbReference>
<dbReference type="PIRSF" id="PIRSF008716">
    <property type="entry name" value="DUF1782"/>
    <property type="match status" value="1"/>
</dbReference>
<dbReference type="SUPFAM" id="SSF54495">
    <property type="entry name" value="UBC-like"/>
    <property type="match status" value="1"/>
</dbReference>
<feature type="chain" id="PRO_0000391978" description="Ubiquitin-fold modifier-conjugating enzyme 1">
    <location>
        <begin position="1"/>
        <end position="164"/>
    </location>
</feature>
<feature type="active site" description="Glycyl thioester intermediate" evidence="1">
    <location>
        <position position="116"/>
    </location>
</feature>
<gene>
    <name type="ORF">GE14107</name>
</gene>
<keyword id="KW-0833">Ubl conjugation pathway</keyword>
<accession>B4P6S9</accession>
<evidence type="ECO:0000250" key="1"/>
<evidence type="ECO:0000305" key="2"/>